<dbReference type="EMBL" id="BC111650">
    <property type="protein sequence ID" value="AAI11651.1"/>
    <property type="molecule type" value="mRNA"/>
</dbReference>
<dbReference type="RefSeq" id="NP_001070550.1">
    <property type="nucleotide sequence ID" value="NM_001077082.2"/>
</dbReference>
<dbReference type="PDB" id="7RRO">
    <property type="method" value="EM"/>
    <property type="resolution" value="3.40 A"/>
    <property type="chains" value="E0/E1/E2/E3=1-208"/>
</dbReference>
<dbReference type="PDBsum" id="7RRO"/>
<dbReference type="EMDB" id="EMD-24664"/>
<dbReference type="SMR" id="Q2M2T2"/>
<dbReference type="FunCoup" id="Q2M2T2">
    <property type="interactions" value="128"/>
</dbReference>
<dbReference type="STRING" id="9913.ENSBTAP00000019944"/>
<dbReference type="PaxDb" id="9913-ENSBTAP00000019944"/>
<dbReference type="GeneID" id="768023"/>
<dbReference type="KEGG" id="bta:768023"/>
<dbReference type="CTD" id="100128569"/>
<dbReference type="eggNOG" id="ENOG502S0K8">
    <property type="taxonomic scope" value="Eukaryota"/>
</dbReference>
<dbReference type="InParanoid" id="Q2M2T2"/>
<dbReference type="OrthoDB" id="9895442at2759"/>
<dbReference type="Proteomes" id="UP000009136">
    <property type="component" value="Unplaced"/>
</dbReference>
<dbReference type="GO" id="GO:0160111">
    <property type="term" value="C:axonemal A tubule inner sheath"/>
    <property type="evidence" value="ECO:0000250"/>
    <property type="project" value="UniProtKB"/>
</dbReference>
<dbReference type="GO" id="GO:0005879">
    <property type="term" value="C:axonemal microtubule"/>
    <property type="evidence" value="ECO:0000314"/>
    <property type="project" value="UniProtKB"/>
</dbReference>
<dbReference type="GO" id="GO:0036126">
    <property type="term" value="C:sperm flagellum"/>
    <property type="evidence" value="ECO:0000250"/>
    <property type="project" value="UniProtKB"/>
</dbReference>
<dbReference type="GO" id="GO:0030317">
    <property type="term" value="P:flagellated sperm motility"/>
    <property type="evidence" value="ECO:0000250"/>
    <property type="project" value="UniProtKB"/>
</dbReference>
<dbReference type="InterPro" id="IPR029203">
    <property type="entry name" value="TKTI1"/>
</dbReference>
<dbReference type="PANTHER" id="PTHR31254">
    <property type="entry name" value="HYPOTHETICAL PROTEIN LOC690617"/>
    <property type="match status" value="1"/>
</dbReference>
<dbReference type="PANTHER" id="PTHR31254:SF1">
    <property type="entry name" value="TEKTIN BUNDLE-INTERACTING PROTEIN 1"/>
    <property type="match status" value="1"/>
</dbReference>
<dbReference type="Pfam" id="PF15041">
    <property type="entry name" value="TKTI1"/>
    <property type="match status" value="1"/>
</dbReference>
<reference key="1">
    <citation type="submission" date="2006-01" db="EMBL/GenBank/DDBJ databases">
        <authorList>
            <consortium name="NIH - Mammalian Gene Collection (MGC) project"/>
        </authorList>
    </citation>
    <scope>NUCLEOTIDE SEQUENCE [LARGE SCALE MRNA]</scope>
    <source>
        <strain>Hereford</strain>
        <tissue>Testis</tissue>
    </source>
</reference>
<reference evidence="4" key="2">
    <citation type="journal article" date="2021" name="Cell">
        <title>De novo identification of mammalian ciliary motility proteins using cryo-EM.</title>
        <authorList>
            <person name="Gui M."/>
            <person name="Farley H."/>
            <person name="Anujan P."/>
            <person name="Anderson J.R."/>
            <person name="Maxwell D.W."/>
            <person name="Whitchurch J.B."/>
            <person name="Botsch J.J."/>
            <person name="Qiu T."/>
            <person name="Meleppattu S."/>
            <person name="Singh S.K."/>
            <person name="Zhang Q."/>
            <person name="Thompson J."/>
            <person name="Lucas J.S."/>
            <person name="Bingle C.D."/>
            <person name="Norris D.P."/>
            <person name="Roy S."/>
            <person name="Brown A."/>
        </authorList>
    </citation>
    <scope>STRUCTURE BY ELECTRON MICROSCOPY (3.40 ANGSTROMS)</scope>
    <scope>FUNCTION</scope>
    <scope>SUBCELLULAR LOCATION</scope>
</reference>
<feature type="chain" id="PRO_0000332194" description="Tektin bundle-interacting protein 1">
    <location>
        <begin position="1"/>
        <end position="208"/>
    </location>
</feature>
<accession>Q2M2T2</accession>
<name>TKTI1_BOVIN</name>
<comment type="function">
    <text evidence="2">Microtubule inner protein (MIP) part of the dynein-decorated doublet microtubules (DMTs) in cilia axoneme, which is required for motile cilia beating. Located at the center of the tektin bundle where may function to recruit tektins or stabilize the bundle.</text>
</comment>
<comment type="subunit">
    <text evidence="1">Microtubule inner protein component of sperm flagellar doublet microtubules.</text>
</comment>
<comment type="subcellular location">
    <subcellularLocation>
        <location evidence="2">Cytoplasm</location>
        <location evidence="2">Cytoskeleton</location>
        <location evidence="2">Cilium axoneme</location>
    </subcellularLocation>
    <subcellularLocation>
        <location evidence="1">Cytoplasm</location>
        <location evidence="1">Cytoskeleton</location>
        <location evidence="1">Flagellum axoneme</location>
    </subcellularLocation>
</comment>
<comment type="tissue specificity">
    <text evidence="2">Expressed in trachea multiciliated cells.</text>
</comment>
<sequence length="208" mass="24500">MQTLRRQAAWPCVPRGTLEVDFPPPLYSDDYLSQEGPRWTPAIKQATRWKYTPMGRDAAGQLWYTGLTNSDSREAWYTLPRAPDSPYREAYARWHGCYGHRERSLPSAYTQRLRETAWYDPIIPAQYTDPSTRWGSVLWKDRPIRGKEFAINRHRFGVEALWRASDYVRYLSAPQRPRYTAQNYRQWGLEPYCPATNQRPPPVYTPSH</sequence>
<protein>
    <recommendedName>
        <fullName evidence="3">Tektin bundle-interacting protein 1</fullName>
    </recommendedName>
    <alternativeName>
        <fullName>Uncharacterized protein C19orf71 homolog</fullName>
    </alternativeName>
</protein>
<keyword id="KW-0002">3D-structure</keyword>
<keyword id="KW-0966">Cell projection</keyword>
<keyword id="KW-0969">Cilium</keyword>
<keyword id="KW-0963">Cytoplasm</keyword>
<keyword id="KW-0206">Cytoskeleton</keyword>
<keyword id="KW-0282">Flagellum</keyword>
<keyword id="KW-1185">Reference proteome</keyword>
<organism>
    <name type="scientific">Bos taurus</name>
    <name type="common">Bovine</name>
    <dbReference type="NCBI Taxonomy" id="9913"/>
    <lineage>
        <taxon>Eukaryota</taxon>
        <taxon>Metazoa</taxon>
        <taxon>Chordata</taxon>
        <taxon>Craniata</taxon>
        <taxon>Vertebrata</taxon>
        <taxon>Euteleostomi</taxon>
        <taxon>Mammalia</taxon>
        <taxon>Eutheria</taxon>
        <taxon>Laurasiatheria</taxon>
        <taxon>Artiodactyla</taxon>
        <taxon>Ruminantia</taxon>
        <taxon>Pecora</taxon>
        <taxon>Bovidae</taxon>
        <taxon>Bovinae</taxon>
        <taxon>Bos</taxon>
    </lineage>
</organism>
<evidence type="ECO:0000250" key="1">
    <source>
        <dbReference type="UniProtKB" id="A6H6Q4"/>
    </source>
</evidence>
<evidence type="ECO:0000269" key="2">
    <source>
    </source>
</evidence>
<evidence type="ECO:0000305" key="3"/>
<evidence type="ECO:0007744" key="4">
    <source>
        <dbReference type="PDB" id="7RRO"/>
    </source>
</evidence>
<gene>
    <name type="primary">TEKTIP1</name>
</gene>
<proteinExistence type="evidence at protein level"/>